<evidence type="ECO:0000255" key="1">
    <source>
        <dbReference type="HAMAP-Rule" id="MF_00236"/>
    </source>
</evidence>
<evidence type="ECO:0000256" key="2">
    <source>
        <dbReference type="SAM" id="MobiDB-lite"/>
    </source>
</evidence>
<keyword id="KW-0997">Cell inner membrane</keyword>
<keyword id="KW-1003">Cell membrane</keyword>
<keyword id="KW-0472">Membrane</keyword>
<keyword id="KW-0653">Protein transport</keyword>
<keyword id="KW-1185">Reference proteome</keyword>
<keyword id="KW-0811">Translocation</keyword>
<keyword id="KW-0812">Transmembrane</keyword>
<keyword id="KW-1133">Transmembrane helix</keyword>
<keyword id="KW-0813">Transport</keyword>
<organism>
    <name type="scientific">Bradyrhizobium diazoefficiens (strain JCM 10833 / BCRC 13528 / IAM 13628 / NBRC 14792 / USDA 110)</name>
    <dbReference type="NCBI Taxonomy" id="224911"/>
    <lineage>
        <taxon>Bacteria</taxon>
        <taxon>Pseudomonadati</taxon>
        <taxon>Pseudomonadota</taxon>
        <taxon>Alphaproteobacteria</taxon>
        <taxon>Hyphomicrobiales</taxon>
        <taxon>Nitrobacteraceae</taxon>
        <taxon>Bradyrhizobium</taxon>
    </lineage>
</organism>
<gene>
    <name evidence="1" type="primary">tatA</name>
    <name type="ordered locus">bsl4751</name>
</gene>
<proteinExistence type="inferred from homology"/>
<feature type="chain" id="PRO_1000044357" description="Sec-independent protein translocase protein TatA">
    <location>
        <begin position="1"/>
        <end position="77"/>
    </location>
</feature>
<feature type="transmembrane region" description="Helical" evidence="1">
    <location>
        <begin position="1"/>
        <end position="21"/>
    </location>
</feature>
<feature type="region of interest" description="Disordered" evidence="2">
    <location>
        <begin position="42"/>
        <end position="77"/>
    </location>
</feature>
<feature type="compositionally biased region" description="Basic and acidic residues" evidence="2">
    <location>
        <begin position="42"/>
        <end position="60"/>
    </location>
</feature>
<protein>
    <recommendedName>
        <fullName evidence="1">Sec-independent protein translocase protein TatA</fullName>
    </recommendedName>
</protein>
<reference key="1">
    <citation type="journal article" date="2002" name="DNA Res.">
        <title>Complete genomic sequence of nitrogen-fixing symbiotic bacterium Bradyrhizobium japonicum USDA110.</title>
        <authorList>
            <person name="Kaneko T."/>
            <person name="Nakamura Y."/>
            <person name="Sato S."/>
            <person name="Minamisawa K."/>
            <person name="Uchiumi T."/>
            <person name="Sasamoto S."/>
            <person name="Watanabe A."/>
            <person name="Idesawa K."/>
            <person name="Iriguchi M."/>
            <person name="Kawashima K."/>
            <person name="Kohara M."/>
            <person name="Matsumoto M."/>
            <person name="Shimpo S."/>
            <person name="Tsuruoka H."/>
            <person name="Wada T."/>
            <person name="Yamada M."/>
            <person name="Tabata S."/>
        </authorList>
    </citation>
    <scope>NUCLEOTIDE SEQUENCE [LARGE SCALE GENOMIC DNA]</scope>
    <source>
        <strain>JCM 10833 / BCRC 13528 / IAM 13628 / NBRC 14792 / USDA 110</strain>
    </source>
</reference>
<dbReference type="EMBL" id="BA000040">
    <property type="protein sequence ID" value="BAC50016.1"/>
    <property type="molecule type" value="Genomic_DNA"/>
</dbReference>
<dbReference type="RefSeq" id="NP_771391.1">
    <property type="nucleotide sequence ID" value="NC_004463.1"/>
</dbReference>
<dbReference type="RefSeq" id="WP_011087519.1">
    <property type="nucleotide sequence ID" value="NZ_CP011360.1"/>
</dbReference>
<dbReference type="SMR" id="Q89KZ7"/>
<dbReference type="FunCoup" id="Q89KZ7">
    <property type="interactions" value="674"/>
</dbReference>
<dbReference type="STRING" id="224911.AAV28_21045"/>
<dbReference type="EnsemblBacteria" id="BAC50016">
    <property type="protein sequence ID" value="BAC50016"/>
    <property type="gene ID" value="BAC50016"/>
</dbReference>
<dbReference type="KEGG" id="bja:bsl4751"/>
<dbReference type="PATRIC" id="fig|224911.44.peg.4584"/>
<dbReference type="eggNOG" id="COG1826">
    <property type="taxonomic scope" value="Bacteria"/>
</dbReference>
<dbReference type="HOGENOM" id="CLU_086034_5_0_5"/>
<dbReference type="InParanoid" id="Q89KZ7"/>
<dbReference type="OrthoDB" id="7161179at2"/>
<dbReference type="PhylomeDB" id="Q89KZ7"/>
<dbReference type="Proteomes" id="UP000002526">
    <property type="component" value="Chromosome"/>
</dbReference>
<dbReference type="GO" id="GO:0033281">
    <property type="term" value="C:TAT protein transport complex"/>
    <property type="evidence" value="ECO:0007669"/>
    <property type="project" value="UniProtKB-UniRule"/>
</dbReference>
<dbReference type="GO" id="GO:0008320">
    <property type="term" value="F:protein transmembrane transporter activity"/>
    <property type="evidence" value="ECO:0007669"/>
    <property type="project" value="UniProtKB-UniRule"/>
</dbReference>
<dbReference type="GO" id="GO:0043953">
    <property type="term" value="P:protein transport by the Tat complex"/>
    <property type="evidence" value="ECO:0007669"/>
    <property type="project" value="UniProtKB-UniRule"/>
</dbReference>
<dbReference type="Gene3D" id="1.20.5.3310">
    <property type="match status" value="1"/>
</dbReference>
<dbReference type="HAMAP" id="MF_00236">
    <property type="entry name" value="TatA_E"/>
    <property type="match status" value="1"/>
</dbReference>
<dbReference type="InterPro" id="IPR003369">
    <property type="entry name" value="TatA/B/E"/>
</dbReference>
<dbReference type="InterPro" id="IPR006312">
    <property type="entry name" value="TatA/E"/>
</dbReference>
<dbReference type="NCBIfam" id="NF001940">
    <property type="entry name" value="PRK00720.1"/>
    <property type="match status" value="1"/>
</dbReference>
<dbReference type="NCBIfam" id="TIGR01411">
    <property type="entry name" value="tatAE"/>
    <property type="match status" value="1"/>
</dbReference>
<dbReference type="PANTHER" id="PTHR42982">
    <property type="entry name" value="SEC-INDEPENDENT PROTEIN TRANSLOCASE PROTEIN TATA"/>
    <property type="match status" value="1"/>
</dbReference>
<dbReference type="PANTHER" id="PTHR42982:SF1">
    <property type="entry name" value="SEC-INDEPENDENT PROTEIN TRANSLOCASE PROTEIN TATA"/>
    <property type="match status" value="1"/>
</dbReference>
<dbReference type="Pfam" id="PF02416">
    <property type="entry name" value="TatA_B_E"/>
    <property type="match status" value="1"/>
</dbReference>
<sequence>MGSLSIWHWILVIAVVLLLFGRGKISDLMGDVAQGIKAFKKGMQDDDKPADKPEPAKSIEHNAAPTAARSDVGSKAV</sequence>
<name>TATA_BRADU</name>
<accession>Q89KZ7</accession>
<comment type="function">
    <text evidence="1">Part of the twin-arginine translocation (Tat) system that transports large folded proteins containing a characteristic twin-arginine motif in their signal peptide across membranes. TatA could form the protein-conducting channel of the Tat system.</text>
</comment>
<comment type="subunit">
    <text evidence="1">The Tat system comprises two distinct complexes: a TatABC complex, containing multiple copies of TatA, TatB and TatC subunits, and a separate TatA complex, containing only TatA subunits. Substrates initially bind to the TatABC complex, which probably triggers association of the separate TatA complex to form the active translocon.</text>
</comment>
<comment type="subcellular location">
    <subcellularLocation>
        <location evidence="1">Cell inner membrane</location>
        <topology evidence="1">Single-pass membrane protein</topology>
    </subcellularLocation>
</comment>
<comment type="similarity">
    <text evidence="1">Belongs to the TatA/E family.</text>
</comment>